<organism>
    <name type="scientific">Granulibacter bethesdensis (strain ATCC BAA-1260 / CGDNIH1)</name>
    <dbReference type="NCBI Taxonomy" id="391165"/>
    <lineage>
        <taxon>Bacteria</taxon>
        <taxon>Pseudomonadati</taxon>
        <taxon>Pseudomonadota</taxon>
        <taxon>Alphaproteobacteria</taxon>
        <taxon>Acetobacterales</taxon>
        <taxon>Acetobacteraceae</taxon>
        <taxon>Granulibacter</taxon>
    </lineage>
</organism>
<name>ATPA_GRABC</name>
<keyword id="KW-0066">ATP synthesis</keyword>
<keyword id="KW-0067">ATP-binding</keyword>
<keyword id="KW-0997">Cell inner membrane</keyword>
<keyword id="KW-1003">Cell membrane</keyword>
<keyword id="KW-0139">CF(1)</keyword>
<keyword id="KW-0375">Hydrogen ion transport</keyword>
<keyword id="KW-0406">Ion transport</keyword>
<keyword id="KW-0472">Membrane</keyword>
<keyword id="KW-0547">Nucleotide-binding</keyword>
<keyword id="KW-1185">Reference proteome</keyword>
<keyword id="KW-1278">Translocase</keyword>
<keyword id="KW-0813">Transport</keyword>
<gene>
    <name evidence="1" type="primary">atpA</name>
    <name type="ordered locus">GbCGDNIH1_2058</name>
</gene>
<protein>
    <recommendedName>
        <fullName evidence="1">ATP synthase subunit alpha</fullName>
        <ecNumber evidence="1">7.1.2.2</ecNumber>
    </recommendedName>
    <alternativeName>
        <fullName evidence="1">ATP synthase F1 sector subunit alpha</fullName>
    </alternativeName>
    <alternativeName>
        <fullName evidence="1">F-ATPase subunit alpha</fullName>
    </alternativeName>
</protein>
<comment type="function">
    <text evidence="1">Produces ATP from ADP in the presence of a proton gradient across the membrane. The alpha chain is a regulatory subunit.</text>
</comment>
<comment type="catalytic activity">
    <reaction evidence="1">
        <text>ATP + H2O + 4 H(+)(in) = ADP + phosphate + 5 H(+)(out)</text>
        <dbReference type="Rhea" id="RHEA:57720"/>
        <dbReference type="ChEBI" id="CHEBI:15377"/>
        <dbReference type="ChEBI" id="CHEBI:15378"/>
        <dbReference type="ChEBI" id="CHEBI:30616"/>
        <dbReference type="ChEBI" id="CHEBI:43474"/>
        <dbReference type="ChEBI" id="CHEBI:456216"/>
        <dbReference type="EC" id="7.1.2.2"/>
    </reaction>
</comment>
<comment type="subunit">
    <text evidence="1">F-type ATPases have 2 components, CF(1) - the catalytic core - and CF(0) - the membrane proton channel. CF(1) has five subunits: alpha(3), beta(3), gamma(1), delta(1), epsilon(1). CF(0) has three main subunits: a(1), b(2) and c(9-12). The alpha and beta chains form an alternating ring which encloses part of the gamma chain. CF(1) is attached to CF(0) by a central stalk formed by the gamma and epsilon chains, while a peripheral stalk is formed by the delta and b chains.</text>
</comment>
<comment type="subcellular location">
    <subcellularLocation>
        <location evidence="1">Cell inner membrane</location>
        <topology evidence="1">Peripheral membrane protein</topology>
    </subcellularLocation>
</comment>
<comment type="similarity">
    <text evidence="1">Belongs to the ATPase alpha/beta chains family.</text>
</comment>
<reference key="1">
    <citation type="journal article" date="2007" name="J. Bacteriol.">
        <title>Genome sequence analysis of the emerging human pathogenic acetic acid bacterium Granulibacter bethesdensis.</title>
        <authorList>
            <person name="Greenberg D.E."/>
            <person name="Porcella S.F."/>
            <person name="Zelazny A.M."/>
            <person name="Virtaneva K."/>
            <person name="Sturdevant D.E."/>
            <person name="Kupko J.J. III"/>
            <person name="Barbian K.D."/>
            <person name="Babar A."/>
            <person name="Dorward D.W."/>
            <person name="Holland S.M."/>
        </authorList>
    </citation>
    <scope>NUCLEOTIDE SEQUENCE [LARGE SCALE GENOMIC DNA]</scope>
    <source>
        <strain>ATCC BAA-1260 / CGDNIH1</strain>
    </source>
</reference>
<feature type="chain" id="PRO_0000302652" description="ATP synthase subunit alpha">
    <location>
        <begin position="1"/>
        <end position="511"/>
    </location>
</feature>
<feature type="binding site" evidence="1">
    <location>
        <begin position="170"/>
        <end position="177"/>
    </location>
    <ligand>
        <name>ATP</name>
        <dbReference type="ChEBI" id="CHEBI:30616"/>
    </ligand>
</feature>
<feature type="site" description="Required for activity" evidence="1">
    <location>
        <position position="371"/>
    </location>
</feature>
<evidence type="ECO:0000255" key="1">
    <source>
        <dbReference type="HAMAP-Rule" id="MF_01346"/>
    </source>
</evidence>
<sequence length="511" mass="55584">MDIRPAEISEILKSQIASFDSEANVAETGQVLSVGDGIARVYGLQNVMAGELVEFPSAGLKGMALNLENDNVGVVIFGDDRQIREGDTVARTREIVDVPVGRGLLGRVVDALGNPIDGKGPLTDVTRTRVEVKAPGIIPRKSVHEPMQTGLKSVDALIPIGRGQRELVIGDRQTGKTTVILDTFINQKPINQGTDESKKLYCIYVAVGQKRSTVAQIVRTLEEQGAMEYSIVVAATASDPAPMQFLAPYTGCAMGEFFRDNAMHAVIAYDDLSKQAVAYRQMSLLLRRPPGREAYPGDVFYLHSRLLERAAKMNDAHGAGSLTALPVIETQAGDVSAYIPTNVISITDGQIFLETELFFKGIRPAVNVGLSVSRVGSSAQIKAMKQVAGSIKLELAQYREMAAFAQFASDLDASTQKLLARGARLTELLKQPQFTPYPVELQVAVIFAGVKGYLDAIPTDKVVEFERRLVAELRGAQKDILDAIRNDREVKSETEAKLRSFLEGFVKNFTV</sequence>
<accession>Q0BQE6</accession>
<proteinExistence type="inferred from homology"/>
<dbReference type="EC" id="7.1.2.2" evidence="1"/>
<dbReference type="EMBL" id="CP000394">
    <property type="protein sequence ID" value="ABI62956.1"/>
    <property type="molecule type" value="Genomic_DNA"/>
</dbReference>
<dbReference type="RefSeq" id="WP_011632758.1">
    <property type="nucleotide sequence ID" value="NC_008343.2"/>
</dbReference>
<dbReference type="SMR" id="Q0BQE6"/>
<dbReference type="STRING" id="391165.GbCGDNIH1_2058"/>
<dbReference type="GeneID" id="69746243"/>
<dbReference type="KEGG" id="gbe:GbCGDNIH1_2058"/>
<dbReference type="eggNOG" id="COG0056">
    <property type="taxonomic scope" value="Bacteria"/>
</dbReference>
<dbReference type="HOGENOM" id="CLU_010091_2_1_5"/>
<dbReference type="OrthoDB" id="9803053at2"/>
<dbReference type="Proteomes" id="UP000001963">
    <property type="component" value="Chromosome"/>
</dbReference>
<dbReference type="GO" id="GO:0005886">
    <property type="term" value="C:plasma membrane"/>
    <property type="evidence" value="ECO:0007669"/>
    <property type="project" value="UniProtKB-SubCell"/>
</dbReference>
<dbReference type="GO" id="GO:0045259">
    <property type="term" value="C:proton-transporting ATP synthase complex"/>
    <property type="evidence" value="ECO:0007669"/>
    <property type="project" value="UniProtKB-KW"/>
</dbReference>
<dbReference type="GO" id="GO:0043531">
    <property type="term" value="F:ADP binding"/>
    <property type="evidence" value="ECO:0007669"/>
    <property type="project" value="TreeGrafter"/>
</dbReference>
<dbReference type="GO" id="GO:0005524">
    <property type="term" value="F:ATP binding"/>
    <property type="evidence" value="ECO:0007669"/>
    <property type="project" value="UniProtKB-UniRule"/>
</dbReference>
<dbReference type="GO" id="GO:0046933">
    <property type="term" value="F:proton-transporting ATP synthase activity, rotational mechanism"/>
    <property type="evidence" value="ECO:0007669"/>
    <property type="project" value="UniProtKB-UniRule"/>
</dbReference>
<dbReference type="CDD" id="cd18113">
    <property type="entry name" value="ATP-synt_F1_alpha_C"/>
    <property type="match status" value="1"/>
</dbReference>
<dbReference type="CDD" id="cd18116">
    <property type="entry name" value="ATP-synt_F1_alpha_N"/>
    <property type="match status" value="1"/>
</dbReference>
<dbReference type="CDD" id="cd01132">
    <property type="entry name" value="F1-ATPase_alpha_CD"/>
    <property type="match status" value="1"/>
</dbReference>
<dbReference type="FunFam" id="1.20.150.20:FF:000001">
    <property type="entry name" value="ATP synthase subunit alpha"/>
    <property type="match status" value="1"/>
</dbReference>
<dbReference type="FunFam" id="2.40.30.20:FF:000001">
    <property type="entry name" value="ATP synthase subunit alpha"/>
    <property type="match status" value="1"/>
</dbReference>
<dbReference type="FunFam" id="3.40.50.300:FF:002432">
    <property type="entry name" value="ATP synthase subunit alpha, mitochondrial"/>
    <property type="match status" value="1"/>
</dbReference>
<dbReference type="Gene3D" id="2.40.30.20">
    <property type="match status" value="1"/>
</dbReference>
<dbReference type="Gene3D" id="1.20.150.20">
    <property type="entry name" value="ATP synthase alpha/beta chain, C-terminal domain"/>
    <property type="match status" value="1"/>
</dbReference>
<dbReference type="Gene3D" id="3.40.50.300">
    <property type="entry name" value="P-loop containing nucleotide triphosphate hydrolases"/>
    <property type="match status" value="1"/>
</dbReference>
<dbReference type="HAMAP" id="MF_01346">
    <property type="entry name" value="ATP_synth_alpha_bact"/>
    <property type="match status" value="1"/>
</dbReference>
<dbReference type="InterPro" id="IPR023366">
    <property type="entry name" value="ATP_synth_asu-like_sf"/>
</dbReference>
<dbReference type="InterPro" id="IPR000793">
    <property type="entry name" value="ATP_synth_asu_C"/>
</dbReference>
<dbReference type="InterPro" id="IPR038376">
    <property type="entry name" value="ATP_synth_asu_C_sf"/>
</dbReference>
<dbReference type="InterPro" id="IPR033732">
    <property type="entry name" value="ATP_synth_F1_a_nt-bd_dom"/>
</dbReference>
<dbReference type="InterPro" id="IPR005294">
    <property type="entry name" value="ATP_synth_F1_asu"/>
</dbReference>
<dbReference type="InterPro" id="IPR020003">
    <property type="entry name" value="ATPase_a/bsu_AS"/>
</dbReference>
<dbReference type="InterPro" id="IPR004100">
    <property type="entry name" value="ATPase_F1/V1/A1_a/bsu_N"/>
</dbReference>
<dbReference type="InterPro" id="IPR036121">
    <property type="entry name" value="ATPase_F1/V1/A1_a/bsu_N_sf"/>
</dbReference>
<dbReference type="InterPro" id="IPR000194">
    <property type="entry name" value="ATPase_F1/V1/A1_a/bsu_nucl-bd"/>
</dbReference>
<dbReference type="InterPro" id="IPR027417">
    <property type="entry name" value="P-loop_NTPase"/>
</dbReference>
<dbReference type="NCBIfam" id="TIGR00962">
    <property type="entry name" value="atpA"/>
    <property type="match status" value="1"/>
</dbReference>
<dbReference type="NCBIfam" id="NF009884">
    <property type="entry name" value="PRK13343.1"/>
    <property type="match status" value="1"/>
</dbReference>
<dbReference type="PANTHER" id="PTHR48082">
    <property type="entry name" value="ATP SYNTHASE SUBUNIT ALPHA, MITOCHONDRIAL"/>
    <property type="match status" value="1"/>
</dbReference>
<dbReference type="PANTHER" id="PTHR48082:SF2">
    <property type="entry name" value="ATP SYNTHASE SUBUNIT ALPHA, MITOCHONDRIAL"/>
    <property type="match status" value="1"/>
</dbReference>
<dbReference type="Pfam" id="PF00006">
    <property type="entry name" value="ATP-synt_ab"/>
    <property type="match status" value="1"/>
</dbReference>
<dbReference type="Pfam" id="PF00306">
    <property type="entry name" value="ATP-synt_ab_C"/>
    <property type="match status" value="1"/>
</dbReference>
<dbReference type="Pfam" id="PF02874">
    <property type="entry name" value="ATP-synt_ab_N"/>
    <property type="match status" value="1"/>
</dbReference>
<dbReference type="PIRSF" id="PIRSF039088">
    <property type="entry name" value="F_ATPase_subunit_alpha"/>
    <property type="match status" value="1"/>
</dbReference>
<dbReference type="SUPFAM" id="SSF47917">
    <property type="entry name" value="C-terminal domain of alpha and beta subunits of F1 ATP synthase"/>
    <property type="match status" value="1"/>
</dbReference>
<dbReference type="SUPFAM" id="SSF50615">
    <property type="entry name" value="N-terminal domain of alpha and beta subunits of F1 ATP synthase"/>
    <property type="match status" value="1"/>
</dbReference>
<dbReference type="SUPFAM" id="SSF52540">
    <property type="entry name" value="P-loop containing nucleoside triphosphate hydrolases"/>
    <property type="match status" value="1"/>
</dbReference>
<dbReference type="PROSITE" id="PS00152">
    <property type="entry name" value="ATPASE_ALPHA_BETA"/>
    <property type="match status" value="1"/>
</dbReference>